<keyword id="KW-0325">Glycoprotein</keyword>
<keyword id="KW-1185">Reference proteome</keyword>
<keyword id="KW-0964">Secreted</keyword>
<keyword id="KW-0732">Signal</keyword>
<accession>O45700</accession>
<evidence type="ECO:0000255" key="1"/>
<evidence type="ECO:0000305" key="2"/>
<sequence>MNLSIFSAIIFSITIASSAIPISENYVSWSSDSNCLDFDDSRDPNAVCEATTTWKRSENSSCIVSVYYVKKEKSSGTSNGIPQCSKTPCDATEKIVVDCETAFREKLANINH</sequence>
<protein>
    <recommendedName>
        <fullName>UPF0375 protein R05A10.4</fullName>
    </recommendedName>
</protein>
<proteinExistence type="inferred from homology"/>
<feature type="signal peptide" evidence="1">
    <location>
        <begin position="1"/>
        <end position="19"/>
    </location>
</feature>
<feature type="chain" id="PRO_0000248525" description="UPF0375 protein R05A10.4">
    <location>
        <begin position="20"/>
        <end position="112"/>
    </location>
</feature>
<feature type="glycosylation site" description="N-linked (GlcNAc...) asparagine" evidence="1">
    <location>
        <position position="59"/>
    </location>
</feature>
<comment type="subcellular location">
    <subcellularLocation>
        <location evidence="2">Secreted</location>
    </subcellularLocation>
</comment>
<comment type="similarity">
    <text evidence="2">Belongs to the UPF0375 family.</text>
</comment>
<organism>
    <name type="scientific">Caenorhabditis elegans</name>
    <dbReference type="NCBI Taxonomy" id="6239"/>
    <lineage>
        <taxon>Eukaryota</taxon>
        <taxon>Metazoa</taxon>
        <taxon>Ecdysozoa</taxon>
        <taxon>Nematoda</taxon>
        <taxon>Chromadorea</taxon>
        <taxon>Rhabditida</taxon>
        <taxon>Rhabditina</taxon>
        <taxon>Rhabditomorpha</taxon>
        <taxon>Rhabditoidea</taxon>
        <taxon>Rhabditidae</taxon>
        <taxon>Peloderinae</taxon>
        <taxon>Caenorhabditis</taxon>
    </lineage>
</organism>
<name>U375C_CAEEL</name>
<gene>
    <name type="ORF">R05A10.4</name>
</gene>
<reference key="1">
    <citation type="journal article" date="1998" name="Science">
        <title>Genome sequence of the nematode C. elegans: a platform for investigating biology.</title>
        <authorList>
            <consortium name="The C. elegans sequencing consortium"/>
        </authorList>
    </citation>
    <scope>NUCLEOTIDE SEQUENCE [LARGE SCALE GENOMIC DNA]</scope>
    <source>
        <strain>Bristol N2</strain>
    </source>
</reference>
<dbReference type="EMBL" id="Z82280">
    <property type="protein sequence ID" value="CAB05264.1"/>
    <property type="molecule type" value="Genomic_DNA"/>
</dbReference>
<dbReference type="PIR" id="T23914">
    <property type="entry name" value="T23914"/>
</dbReference>
<dbReference type="RefSeq" id="NP_502718.1">
    <property type="nucleotide sequence ID" value="NM_070317.3"/>
</dbReference>
<dbReference type="SMR" id="O45700"/>
<dbReference type="FunCoup" id="O45700">
    <property type="interactions" value="828"/>
</dbReference>
<dbReference type="PaxDb" id="6239-R05A10.4"/>
<dbReference type="EnsemblMetazoa" id="R05A10.4.1">
    <property type="protein sequence ID" value="R05A10.4.1"/>
    <property type="gene ID" value="WBGene00011021"/>
</dbReference>
<dbReference type="GeneID" id="187595"/>
<dbReference type="KEGG" id="cel:CELE_R05A10.4"/>
<dbReference type="UCSC" id="R05A10.4">
    <property type="organism name" value="c. elegans"/>
</dbReference>
<dbReference type="AGR" id="WB:WBGene00011021"/>
<dbReference type="CTD" id="187595"/>
<dbReference type="WormBase" id="R05A10.4">
    <property type="protein sequence ID" value="CE16290"/>
    <property type="gene ID" value="WBGene00011021"/>
</dbReference>
<dbReference type="HOGENOM" id="CLU_2028770_0_0_1"/>
<dbReference type="InParanoid" id="O45700"/>
<dbReference type="OrthoDB" id="5872898at2759"/>
<dbReference type="PhylomeDB" id="O45700"/>
<dbReference type="PRO" id="PR:O45700"/>
<dbReference type="Proteomes" id="UP000001940">
    <property type="component" value="Chromosome IV"/>
</dbReference>
<dbReference type="Bgee" id="WBGene00011021">
    <property type="expression patterns" value="Expressed in larva and 4 other cell types or tissues"/>
</dbReference>
<dbReference type="GO" id="GO:0005576">
    <property type="term" value="C:extracellular region"/>
    <property type="evidence" value="ECO:0007669"/>
    <property type="project" value="UniProtKB-SubCell"/>
</dbReference>
<dbReference type="InterPro" id="IPR009981">
    <property type="entry name" value="DUF1505"/>
</dbReference>
<dbReference type="Pfam" id="PF07403">
    <property type="entry name" value="DUF1505"/>
    <property type="match status" value="1"/>
</dbReference>